<accession>A4W6G3</accession>
<proteinExistence type="inferred from homology"/>
<protein>
    <recommendedName>
        <fullName evidence="1">RNA polymerase-associated protein RapA</fullName>
        <ecNumber evidence="1">3.6.4.-</ecNumber>
    </recommendedName>
    <alternativeName>
        <fullName evidence="1">ATP-dependent helicase HepA</fullName>
    </alternativeName>
</protein>
<sequence length="968" mass="109742">MPFTLGQRWISDTESELGLGTVVALDARMVTIMFPATGENRLYARNDSPVTRVMFNPGDTVTSHEGWQLKIEDVKEENGLLAYTGTRLDTDEADVMLREVMLDSRLVFSKPQDRLFAGQIDRMDRFSLRYRARKFQSEQYRMPWSGLRGQRTSLIPHQLNIAHDVGRRHAPRVLLADEVGLGKTIEAGMILHQQLLSGAAERVLIVVPETLQHQWLVEMLRRFNLRFSLFDDERYAEAQHDADNPFETEQLVICSLDFVRRSKQRLEHLCDAEWDLLVVDEAHHLVWSENAPSREYMAIEQLAERVPGILLLTATPEQLGLESHFARLRLLDPNRFHDFDVFVEEQQNYRPVADAVAMLLAGKHLSNDELNTLSDLIGEQDIEPLLHTANSDRDGADAARQELVSMLMDRHGTSRVLFRNTRNGVKGFPKRELHTIKLPLPTQYQTAIKVSGIMGARKSAEERARDMLYPEQIYQEFEGDTGTWWNFDPRVEWLMGYLTAHRSQKVLVICAKAATALQLEQVLREREGIRAAVFHEGMSIIERDRAAAWFGEEDSGAQVLLCSEIGSEGRNFQFASKLVMFDLPFNPDLLEQRIGRLDRIGQAHDIQIHVPYLENTAQSVLVRWFHEGLDAFEHTCPTGRTIYDQVHSDLIGYLASPENTDGFDDLIKTCREKHDALKIQLEQGRDRLLEIHSNGGEKAQALAESIEEQDDDTSLISFAMNLFDIVGINQDDRGENMIVLTPSDHMLVPDFPGLPEDGCTITFERDVALSREDAQFITWEHPLIRNGLDLILSGDTGSSTISLLKNKALPVGTLLLELIYVVEAQAPKQLQLNRFLPATPVRLMLDKNGTNLAAQVEFESFNRQLSAVNRHTGSKLVNAVQQDVHAILQQGEAQIEKAARALIDSARREADEKLSAELSRLEALRAVNPNIRDDELAAIESNRQQVLESLDQASWRLDALRLIVVTHQ</sequence>
<name>RAPA_ENT38</name>
<reference key="1">
    <citation type="journal article" date="2010" name="PLoS Genet.">
        <title>Genome sequence of the plant growth promoting endophytic bacterium Enterobacter sp. 638.</title>
        <authorList>
            <person name="Taghavi S."/>
            <person name="van der Lelie D."/>
            <person name="Hoffman A."/>
            <person name="Zhang Y.B."/>
            <person name="Walla M.D."/>
            <person name="Vangronsveld J."/>
            <person name="Newman L."/>
            <person name="Monchy S."/>
        </authorList>
    </citation>
    <scope>NUCLEOTIDE SEQUENCE [LARGE SCALE GENOMIC DNA]</scope>
    <source>
        <strain>638</strain>
    </source>
</reference>
<gene>
    <name evidence="1" type="primary">rapA</name>
    <name type="ordered locus">Ent638_0606</name>
</gene>
<dbReference type="EC" id="3.6.4.-" evidence="1"/>
<dbReference type="EMBL" id="CP000653">
    <property type="protein sequence ID" value="ABP59293.1"/>
    <property type="molecule type" value="Genomic_DNA"/>
</dbReference>
<dbReference type="RefSeq" id="WP_012016015.1">
    <property type="nucleotide sequence ID" value="NC_009436.1"/>
</dbReference>
<dbReference type="SMR" id="A4W6G3"/>
<dbReference type="STRING" id="399742.Ent638_0606"/>
<dbReference type="KEGG" id="ent:Ent638_0606"/>
<dbReference type="eggNOG" id="COG0553">
    <property type="taxonomic scope" value="Bacteria"/>
</dbReference>
<dbReference type="HOGENOM" id="CLU_011520_0_0_6"/>
<dbReference type="OrthoDB" id="9814088at2"/>
<dbReference type="Proteomes" id="UP000000230">
    <property type="component" value="Chromosome"/>
</dbReference>
<dbReference type="GO" id="GO:0005524">
    <property type="term" value="F:ATP binding"/>
    <property type="evidence" value="ECO:0007669"/>
    <property type="project" value="UniProtKB-UniRule"/>
</dbReference>
<dbReference type="GO" id="GO:0003677">
    <property type="term" value="F:DNA binding"/>
    <property type="evidence" value="ECO:0007669"/>
    <property type="project" value="UniProtKB-KW"/>
</dbReference>
<dbReference type="GO" id="GO:0004386">
    <property type="term" value="F:helicase activity"/>
    <property type="evidence" value="ECO:0007669"/>
    <property type="project" value="UniProtKB-UniRule"/>
</dbReference>
<dbReference type="GO" id="GO:0016817">
    <property type="term" value="F:hydrolase activity, acting on acid anhydrides"/>
    <property type="evidence" value="ECO:0007669"/>
    <property type="project" value="InterPro"/>
</dbReference>
<dbReference type="GO" id="GO:0006355">
    <property type="term" value="P:regulation of DNA-templated transcription"/>
    <property type="evidence" value="ECO:0007669"/>
    <property type="project" value="UniProtKB-UniRule"/>
</dbReference>
<dbReference type="CDD" id="cd18011">
    <property type="entry name" value="DEXDc_RapA"/>
    <property type="match status" value="1"/>
</dbReference>
<dbReference type="CDD" id="cd18793">
    <property type="entry name" value="SF2_C_SNF"/>
    <property type="match status" value="1"/>
</dbReference>
<dbReference type="FunFam" id="3.30.360.80:FF:000001">
    <property type="entry name" value="RNA polymerase-associated protein RapA"/>
    <property type="match status" value="1"/>
</dbReference>
<dbReference type="FunFam" id="3.40.50.10810:FF:000012">
    <property type="entry name" value="RNA polymerase-associated protein RapA"/>
    <property type="match status" value="1"/>
</dbReference>
<dbReference type="FunFam" id="3.40.50.300:FF:000350">
    <property type="entry name" value="RNA polymerase-associated protein RapA"/>
    <property type="match status" value="1"/>
</dbReference>
<dbReference type="Gene3D" id="2.30.30.140">
    <property type="match status" value="1"/>
</dbReference>
<dbReference type="Gene3D" id="2.30.30.930">
    <property type="match status" value="1"/>
</dbReference>
<dbReference type="Gene3D" id="3.30.360.80">
    <property type="match status" value="1"/>
</dbReference>
<dbReference type="Gene3D" id="6.10.140.1500">
    <property type="match status" value="1"/>
</dbReference>
<dbReference type="Gene3D" id="6.10.140.2230">
    <property type="match status" value="1"/>
</dbReference>
<dbReference type="Gene3D" id="3.40.50.300">
    <property type="entry name" value="P-loop containing nucleotide triphosphate hydrolases"/>
    <property type="match status" value="1"/>
</dbReference>
<dbReference type="Gene3D" id="3.40.50.10810">
    <property type="entry name" value="Tandem AAA-ATPase domain"/>
    <property type="match status" value="1"/>
</dbReference>
<dbReference type="HAMAP" id="MF_01821">
    <property type="entry name" value="Helicase_RapA"/>
    <property type="match status" value="1"/>
</dbReference>
<dbReference type="InterPro" id="IPR014001">
    <property type="entry name" value="Helicase_ATP-bd"/>
</dbReference>
<dbReference type="InterPro" id="IPR001650">
    <property type="entry name" value="Helicase_C-like"/>
</dbReference>
<dbReference type="InterPro" id="IPR023949">
    <property type="entry name" value="Helicase_RapA"/>
</dbReference>
<dbReference type="InterPro" id="IPR027417">
    <property type="entry name" value="P-loop_NTPase"/>
</dbReference>
<dbReference type="InterPro" id="IPR022737">
    <property type="entry name" value="RapA_C"/>
</dbReference>
<dbReference type="InterPro" id="IPR038718">
    <property type="entry name" value="SNF2-like_sf"/>
</dbReference>
<dbReference type="InterPro" id="IPR049730">
    <property type="entry name" value="SNF2/RAD54-like_C"/>
</dbReference>
<dbReference type="InterPro" id="IPR000330">
    <property type="entry name" value="SNF2_N"/>
</dbReference>
<dbReference type="InterPro" id="IPR040765">
    <property type="entry name" value="Tudor_1_RapA"/>
</dbReference>
<dbReference type="InterPro" id="IPR040766">
    <property type="entry name" value="Tudor_2_RapA"/>
</dbReference>
<dbReference type="NCBIfam" id="NF003426">
    <property type="entry name" value="PRK04914.1"/>
    <property type="match status" value="1"/>
</dbReference>
<dbReference type="PANTHER" id="PTHR45766">
    <property type="entry name" value="DNA ANNEALING HELICASE AND ENDONUCLEASE ZRANB3 FAMILY MEMBER"/>
    <property type="match status" value="1"/>
</dbReference>
<dbReference type="PANTHER" id="PTHR45766:SF6">
    <property type="entry name" value="SWI_SNF-RELATED MATRIX-ASSOCIATED ACTIN-DEPENDENT REGULATOR OF CHROMATIN SUBFAMILY A-LIKE PROTEIN 1"/>
    <property type="match status" value="1"/>
</dbReference>
<dbReference type="Pfam" id="PF00271">
    <property type="entry name" value="Helicase_C"/>
    <property type="match status" value="1"/>
</dbReference>
<dbReference type="Pfam" id="PF12137">
    <property type="entry name" value="RapA_C"/>
    <property type="match status" value="1"/>
</dbReference>
<dbReference type="Pfam" id="PF00176">
    <property type="entry name" value="SNF2-rel_dom"/>
    <property type="match status" value="1"/>
</dbReference>
<dbReference type="Pfam" id="PF18339">
    <property type="entry name" value="Tudor_1_RapA"/>
    <property type="match status" value="1"/>
</dbReference>
<dbReference type="Pfam" id="PF18337">
    <property type="entry name" value="Tudor_RapA"/>
    <property type="match status" value="1"/>
</dbReference>
<dbReference type="SMART" id="SM00487">
    <property type="entry name" value="DEXDc"/>
    <property type="match status" value="1"/>
</dbReference>
<dbReference type="SMART" id="SM00490">
    <property type="entry name" value="HELICc"/>
    <property type="match status" value="1"/>
</dbReference>
<dbReference type="SUPFAM" id="SSF52540">
    <property type="entry name" value="P-loop containing nucleoside triphosphate hydrolases"/>
    <property type="match status" value="2"/>
</dbReference>
<dbReference type="PROSITE" id="PS51192">
    <property type="entry name" value="HELICASE_ATP_BIND_1"/>
    <property type="match status" value="1"/>
</dbReference>
<dbReference type="PROSITE" id="PS51194">
    <property type="entry name" value="HELICASE_CTER"/>
    <property type="match status" value="1"/>
</dbReference>
<feature type="chain" id="PRO_1000088357" description="RNA polymerase-associated protein RapA">
    <location>
        <begin position="1"/>
        <end position="968"/>
    </location>
</feature>
<feature type="domain" description="Helicase ATP-binding" evidence="1">
    <location>
        <begin position="164"/>
        <end position="334"/>
    </location>
</feature>
<feature type="domain" description="Helicase C-terminal" evidence="1">
    <location>
        <begin position="490"/>
        <end position="644"/>
    </location>
</feature>
<feature type="short sequence motif" description="DEAH box">
    <location>
        <begin position="280"/>
        <end position="283"/>
    </location>
</feature>
<feature type="binding site" evidence="1">
    <location>
        <begin position="177"/>
        <end position="184"/>
    </location>
    <ligand>
        <name>ATP</name>
        <dbReference type="ChEBI" id="CHEBI:30616"/>
    </ligand>
</feature>
<comment type="function">
    <text evidence="1">Transcription regulator that activates transcription by stimulating RNA polymerase (RNAP) recycling in case of stress conditions such as supercoiled DNA or high salt concentrations. Probably acts by releasing the RNAP, when it is trapped or immobilized on tightly supercoiled DNA. Does not activate transcription on linear DNA. Probably not involved in DNA repair.</text>
</comment>
<comment type="subunit">
    <text evidence="1">Interacts with the RNAP. Has a higher affinity for the core RNAP than for the holoenzyme. Its ATPase activity is stimulated by binding to RNAP.</text>
</comment>
<comment type="similarity">
    <text evidence="1">Belongs to the SNF2/RAD54 helicase family. RapA subfamily.</text>
</comment>
<keyword id="KW-0010">Activator</keyword>
<keyword id="KW-0067">ATP-binding</keyword>
<keyword id="KW-0238">DNA-binding</keyword>
<keyword id="KW-0347">Helicase</keyword>
<keyword id="KW-0378">Hydrolase</keyword>
<keyword id="KW-0547">Nucleotide-binding</keyword>
<keyword id="KW-0804">Transcription</keyword>
<keyword id="KW-0805">Transcription regulation</keyword>
<evidence type="ECO:0000255" key="1">
    <source>
        <dbReference type="HAMAP-Rule" id="MF_01821"/>
    </source>
</evidence>
<organism>
    <name type="scientific">Enterobacter sp. (strain 638)</name>
    <dbReference type="NCBI Taxonomy" id="399742"/>
    <lineage>
        <taxon>Bacteria</taxon>
        <taxon>Pseudomonadati</taxon>
        <taxon>Pseudomonadota</taxon>
        <taxon>Gammaproteobacteria</taxon>
        <taxon>Enterobacterales</taxon>
        <taxon>Enterobacteriaceae</taxon>
        <taxon>Enterobacter</taxon>
    </lineage>
</organism>